<organism>
    <name type="scientific">Yersinia pestis</name>
    <dbReference type="NCBI Taxonomy" id="632"/>
    <lineage>
        <taxon>Bacteria</taxon>
        <taxon>Pseudomonadati</taxon>
        <taxon>Pseudomonadota</taxon>
        <taxon>Gammaproteobacteria</taxon>
        <taxon>Enterobacterales</taxon>
        <taxon>Yersiniaceae</taxon>
        <taxon>Yersinia</taxon>
    </lineage>
</organism>
<comment type="function">
    <text evidence="1">Peptide chain release factor 1 directs the termination of translation in response to the peptide chain termination codons UAG and UAA.</text>
</comment>
<comment type="subcellular location">
    <subcellularLocation>
        <location evidence="1">Cytoplasm</location>
    </subcellularLocation>
</comment>
<comment type="PTM">
    <text evidence="1">Methylated by PrmC. Methylation increases the termination efficiency of RF1.</text>
</comment>
<comment type="similarity">
    <text evidence="1">Belongs to the prokaryotic/mitochondrial release factor family.</text>
</comment>
<proteinExistence type="inferred from homology"/>
<reference key="1">
    <citation type="journal article" date="2001" name="Nature">
        <title>Genome sequence of Yersinia pestis, the causative agent of plague.</title>
        <authorList>
            <person name="Parkhill J."/>
            <person name="Wren B.W."/>
            <person name="Thomson N.R."/>
            <person name="Titball R.W."/>
            <person name="Holden M.T.G."/>
            <person name="Prentice M.B."/>
            <person name="Sebaihia M."/>
            <person name="James K.D."/>
            <person name="Churcher C.M."/>
            <person name="Mungall K.L."/>
            <person name="Baker S."/>
            <person name="Basham D."/>
            <person name="Bentley S.D."/>
            <person name="Brooks K."/>
            <person name="Cerdeno-Tarraga A.-M."/>
            <person name="Chillingworth T."/>
            <person name="Cronin A."/>
            <person name="Davies R.M."/>
            <person name="Davis P."/>
            <person name="Dougan G."/>
            <person name="Feltwell T."/>
            <person name="Hamlin N."/>
            <person name="Holroyd S."/>
            <person name="Jagels K."/>
            <person name="Karlyshev A.V."/>
            <person name="Leather S."/>
            <person name="Moule S."/>
            <person name="Oyston P.C.F."/>
            <person name="Quail M.A."/>
            <person name="Rutherford K.M."/>
            <person name="Simmonds M."/>
            <person name="Skelton J."/>
            <person name="Stevens K."/>
            <person name="Whitehead S."/>
            <person name="Barrell B.G."/>
        </authorList>
    </citation>
    <scope>NUCLEOTIDE SEQUENCE [LARGE SCALE GENOMIC DNA]</scope>
    <source>
        <strain>CO-92 / Biovar Orientalis</strain>
    </source>
</reference>
<reference key="2">
    <citation type="journal article" date="2002" name="J. Bacteriol.">
        <title>Genome sequence of Yersinia pestis KIM.</title>
        <authorList>
            <person name="Deng W."/>
            <person name="Burland V."/>
            <person name="Plunkett G. III"/>
            <person name="Boutin A."/>
            <person name="Mayhew G.F."/>
            <person name="Liss P."/>
            <person name="Perna N.T."/>
            <person name="Rose D.J."/>
            <person name="Mau B."/>
            <person name="Zhou S."/>
            <person name="Schwartz D.C."/>
            <person name="Fetherston J.D."/>
            <person name="Lindler L.E."/>
            <person name="Brubaker R.R."/>
            <person name="Plano G.V."/>
            <person name="Straley S.C."/>
            <person name="McDonough K.A."/>
            <person name="Nilles M.L."/>
            <person name="Matson J.S."/>
            <person name="Blattner F.R."/>
            <person name="Perry R.D."/>
        </authorList>
    </citation>
    <scope>NUCLEOTIDE SEQUENCE [LARGE SCALE GENOMIC DNA]</scope>
    <source>
        <strain>KIM10+ / Biovar Mediaevalis</strain>
    </source>
</reference>
<reference key="3">
    <citation type="journal article" date="2004" name="DNA Res.">
        <title>Complete genome sequence of Yersinia pestis strain 91001, an isolate avirulent to humans.</title>
        <authorList>
            <person name="Song Y."/>
            <person name="Tong Z."/>
            <person name="Wang J."/>
            <person name="Wang L."/>
            <person name="Guo Z."/>
            <person name="Han Y."/>
            <person name="Zhang J."/>
            <person name="Pei D."/>
            <person name="Zhou D."/>
            <person name="Qin H."/>
            <person name="Pang X."/>
            <person name="Han Y."/>
            <person name="Zhai J."/>
            <person name="Li M."/>
            <person name="Cui B."/>
            <person name="Qi Z."/>
            <person name="Jin L."/>
            <person name="Dai R."/>
            <person name="Chen F."/>
            <person name="Li S."/>
            <person name="Ye C."/>
            <person name="Du Z."/>
            <person name="Lin W."/>
            <person name="Wang J."/>
            <person name="Yu J."/>
            <person name="Yang H."/>
            <person name="Wang J."/>
            <person name="Huang P."/>
            <person name="Yang R."/>
        </authorList>
    </citation>
    <scope>NUCLEOTIDE SEQUENCE [LARGE SCALE GENOMIC DNA]</scope>
    <source>
        <strain>91001 / Biovar Mediaevalis</strain>
    </source>
</reference>
<dbReference type="EMBL" id="AL590842">
    <property type="protein sequence ID" value="CAL20654.1"/>
    <property type="molecule type" value="Genomic_DNA"/>
</dbReference>
<dbReference type="EMBL" id="AE009952">
    <property type="protein sequence ID" value="AAM85849.1"/>
    <property type="molecule type" value="Genomic_DNA"/>
</dbReference>
<dbReference type="EMBL" id="AE017042">
    <property type="protein sequence ID" value="AAS62085.1"/>
    <property type="molecule type" value="Genomic_DNA"/>
</dbReference>
<dbReference type="PIR" id="AC0246">
    <property type="entry name" value="AC0246"/>
</dbReference>
<dbReference type="RefSeq" id="WP_002211236.1">
    <property type="nucleotide sequence ID" value="NZ_WUCM01000039.1"/>
</dbReference>
<dbReference type="RefSeq" id="YP_002347003.1">
    <property type="nucleotide sequence ID" value="NC_003143.1"/>
</dbReference>
<dbReference type="SMR" id="Q8ZEX8"/>
<dbReference type="STRING" id="214092.YPO2017"/>
<dbReference type="PaxDb" id="214092-YPO2017"/>
<dbReference type="DNASU" id="1147237"/>
<dbReference type="EnsemblBacteria" id="AAS62085">
    <property type="protein sequence ID" value="AAS62085"/>
    <property type="gene ID" value="YP_1865"/>
</dbReference>
<dbReference type="GeneID" id="57976644"/>
<dbReference type="KEGG" id="ype:YPO2017"/>
<dbReference type="KEGG" id="ypk:y2290"/>
<dbReference type="KEGG" id="ypm:YP_1865"/>
<dbReference type="PATRIC" id="fig|214092.21.peg.2402"/>
<dbReference type="eggNOG" id="COG0216">
    <property type="taxonomic scope" value="Bacteria"/>
</dbReference>
<dbReference type="HOGENOM" id="CLU_036856_0_1_6"/>
<dbReference type="OMA" id="DHRVGFK"/>
<dbReference type="OrthoDB" id="9806673at2"/>
<dbReference type="Proteomes" id="UP000000815">
    <property type="component" value="Chromosome"/>
</dbReference>
<dbReference type="Proteomes" id="UP000001019">
    <property type="component" value="Chromosome"/>
</dbReference>
<dbReference type="Proteomes" id="UP000002490">
    <property type="component" value="Chromosome"/>
</dbReference>
<dbReference type="GO" id="GO:0005737">
    <property type="term" value="C:cytoplasm"/>
    <property type="evidence" value="ECO:0007669"/>
    <property type="project" value="UniProtKB-SubCell"/>
</dbReference>
<dbReference type="GO" id="GO:0016149">
    <property type="term" value="F:translation release factor activity, codon specific"/>
    <property type="evidence" value="ECO:0007669"/>
    <property type="project" value="UniProtKB-UniRule"/>
</dbReference>
<dbReference type="FunFam" id="3.30.160.20:FF:000004">
    <property type="entry name" value="Peptide chain release factor 1"/>
    <property type="match status" value="1"/>
</dbReference>
<dbReference type="FunFam" id="3.30.70.1660:FF:000002">
    <property type="entry name" value="Peptide chain release factor 1"/>
    <property type="match status" value="1"/>
</dbReference>
<dbReference type="FunFam" id="3.30.70.1660:FF:000004">
    <property type="entry name" value="Peptide chain release factor 1"/>
    <property type="match status" value="1"/>
</dbReference>
<dbReference type="Gene3D" id="3.30.160.20">
    <property type="match status" value="1"/>
</dbReference>
<dbReference type="Gene3D" id="3.30.70.1660">
    <property type="match status" value="1"/>
</dbReference>
<dbReference type="Gene3D" id="6.10.140.1950">
    <property type="match status" value="1"/>
</dbReference>
<dbReference type="HAMAP" id="MF_00093">
    <property type="entry name" value="Rel_fac_1"/>
    <property type="match status" value="1"/>
</dbReference>
<dbReference type="InterPro" id="IPR005139">
    <property type="entry name" value="PCRF"/>
</dbReference>
<dbReference type="InterPro" id="IPR000352">
    <property type="entry name" value="Pep_chain_release_fac_I"/>
</dbReference>
<dbReference type="InterPro" id="IPR045853">
    <property type="entry name" value="Pep_chain_release_fac_I_sf"/>
</dbReference>
<dbReference type="InterPro" id="IPR050057">
    <property type="entry name" value="Prokaryotic/Mito_RF"/>
</dbReference>
<dbReference type="InterPro" id="IPR004373">
    <property type="entry name" value="RF-1"/>
</dbReference>
<dbReference type="NCBIfam" id="TIGR00019">
    <property type="entry name" value="prfA"/>
    <property type="match status" value="1"/>
</dbReference>
<dbReference type="NCBIfam" id="NF001859">
    <property type="entry name" value="PRK00591.1"/>
    <property type="match status" value="1"/>
</dbReference>
<dbReference type="PANTHER" id="PTHR43804">
    <property type="entry name" value="LD18447P"/>
    <property type="match status" value="1"/>
</dbReference>
<dbReference type="PANTHER" id="PTHR43804:SF7">
    <property type="entry name" value="LD18447P"/>
    <property type="match status" value="1"/>
</dbReference>
<dbReference type="Pfam" id="PF03462">
    <property type="entry name" value="PCRF"/>
    <property type="match status" value="1"/>
</dbReference>
<dbReference type="Pfam" id="PF00472">
    <property type="entry name" value="RF-1"/>
    <property type="match status" value="1"/>
</dbReference>
<dbReference type="SMART" id="SM00937">
    <property type="entry name" value="PCRF"/>
    <property type="match status" value="1"/>
</dbReference>
<dbReference type="SUPFAM" id="SSF75620">
    <property type="entry name" value="Release factor"/>
    <property type="match status" value="1"/>
</dbReference>
<dbReference type="PROSITE" id="PS00745">
    <property type="entry name" value="RF_PROK_I"/>
    <property type="match status" value="1"/>
</dbReference>
<evidence type="ECO:0000255" key="1">
    <source>
        <dbReference type="HAMAP-Rule" id="MF_00093"/>
    </source>
</evidence>
<evidence type="ECO:0000256" key="2">
    <source>
        <dbReference type="SAM" id="MobiDB-lite"/>
    </source>
</evidence>
<sequence>MKSSIVAKLEALQERHEEVLAYLGDASVIADQDRFRALSREYAQLTDVTRCFKEWRSAQDDIEAAEMMLDDLEMREMAQEELKIAKARSEELEQQLQVLLLPKDPDDERDCFLEIRAGTGGDEAAIFAGDMFRMYSRYAETRRWKVEIMSASEGEHGGYKEIIAKISGDGVFGQLKFESGGHRVQRVPETESQGRIHTSACTVAVMPAIPEAELPEINAGDLRIDTFRSSGAGGQHVNTTDSAIRITHIPTGIVVECQDERSQHKNKAKAMSVLGARIRAAEMQKRQLAEASERRNLLGTGDRSDRNRTYNFPQGRVTDHRINLTLYRLDEVMEGKLDMLIQPIVQEYQADQLSALSEQD</sequence>
<gene>
    <name evidence="1" type="primary">prfA</name>
    <name type="ordered locus">YPO2017</name>
    <name type="ordered locus">y2290</name>
    <name type="ordered locus">YP_1865</name>
</gene>
<protein>
    <recommendedName>
        <fullName evidence="1">Peptide chain release factor 1</fullName>
        <shortName evidence="1">RF-1</shortName>
    </recommendedName>
</protein>
<name>RF1_YERPE</name>
<keyword id="KW-0963">Cytoplasm</keyword>
<keyword id="KW-0488">Methylation</keyword>
<keyword id="KW-0648">Protein biosynthesis</keyword>
<keyword id="KW-1185">Reference proteome</keyword>
<accession>Q8ZEX8</accession>
<accession>Q0WFD5</accession>
<feature type="chain" id="PRO_0000177776" description="Peptide chain release factor 1">
    <location>
        <begin position="1"/>
        <end position="360"/>
    </location>
</feature>
<feature type="region of interest" description="Disordered" evidence="2">
    <location>
        <begin position="291"/>
        <end position="312"/>
    </location>
</feature>
<feature type="compositionally biased region" description="Basic and acidic residues" evidence="2">
    <location>
        <begin position="291"/>
        <end position="308"/>
    </location>
</feature>
<feature type="modified residue" description="N5-methylglutamine" evidence="1">
    <location>
        <position position="235"/>
    </location>
</feature>